<proteinExistence type="inferred from homology"/>
<gene>
    <name evidence="1" type="primary">LIP1</name>
    <name type="ORF">POPTRDRAFT_558638</name>
</gene>
<feature type="chain" id="PRO_0000398854" description="Lipoyl synthase, mitochondrial">
    <location>
        <begin position="1"/>
        <end position="385"/>
    </location>
</feature>
<feature type="domain" description="Radical SAM core" evidence="2">
    <location>
        <begin position="129"/>
        <end position="349"/>
    </location>
</feature>
<feature type="region of interest" description="Disordered" evidence="3">
    <location>
        <begin position="18"/>
        <end position="40"/>
    </location>
</feature>
<feature type="binding site" evidence="1">
    <location>
        <position position="113"/>
    </location>
    <ligand>
        <name>[4Fe-4S] cluster</name>
        <dbReference type="ChEBI" id="CHEBI:49883"/>
        <label>1</label>
    </ligand>
</feature>
<feature type="binding site" evidence="1">
    <location>
        <position position="118"/>
    </location>
    <ligand>
        <name>[4Fe-4S] cluster</name>
        <dbReference type="ChEBI" id="CHEBI:49883"/>
        <label>1</label>
    </ligand>
</feature>
<feature type="binding site" evidence="1">
    <location>
        <position position="124"/>
    </location>
    <ligand>
        <name>[4Fe-4S] cluster</name>
        <dbReference type="ChEBI" id="CHEBI:49883"/>
        <label>1</label>
    </ligand>
</feature>
<feature type="binding site" evidence="1">
    <location>
        <position position="144"/>
    </location>
    <ligand>
        <name>[4Fe-4S] cluster</name>
        <dbReference type="ChEBI" id="CHEBI:49883"/>
        <label>2</label>
        <note>4Fe-4S-S-AdoMet</note>
    </ligand>
</feature>
<feature type="binding site" evidence="1">
    <location>
        <position position="148"/>
    </location>
    <ligand>
        <name>[4Fe-4S] cluster</name>
        <dbReference type="ChEBI" id="CHEBI:49883"/>
        <label>2</label>
        <note>4Fe-4S-S-AdoMet</note>
    </ligand>
</feature>
<feature type="binding site" evidence="1">
    <location>
        <position position="151"/>
    </location>
    <ligand>
        <name>[4Fe-4S] cluster</name>
        <dbReference type="ChEBI" id="CHEBI:49883"/>
        <label>2</label>
        <note>4Fe-4S-S-AdoMet</note>
    </ligand>
</feature>
<feature type="binding site" evidence="1">
    <location>
        <position position="360"/>
    </location>
    <ligand>
        <name>[4Fe-4S] cluster</name>
        <dbReference type="ChEBI" id="CHEBI:49883"/>
        <label>1</label>
    </ligand>
</feature>
<protein>
    <recommendedName>
        <fullName evidence="1">Lipoyl synthase, mitochondrial</fullName>
        <ecNumber evidence="1">2.8.1.8</ecNumber>
    </recommendedName>
    <alternativeName>
        <fullName evidence="1">Lipoate synthase</fullName>
        <shortName evidence="1">LS</shortName>
        <shortName evidence="1">Lip-syn</shortName>
    </alternativeName>
    <alternativeName>
        <fullName evidence="1">Lipoic acid synthase</fullName>
    </alternativeName>
</protein>
<keyword id="KW-0004">4Fe-4S</keyword>
<keyword id="KW-0408">Iron</keyword>
<keyword id="KW-0411">Iron-sulfur</keyword>
<keyword id="KW-0479">Metal-binding</keyword>
<keyword id="KW-0496">Mitochondrion</keyword>
<keyword id="KW-1185">Reference proteome</keyword>
<keyword id="KW-0949">S-adenosyl-L-methionine</keyword>
<keyword id="KW-0808">Transferase</keyword>
<reference key="1">
    <citation type="journal article" date="2006" name="Science">
        <title>The genome of black cottonwood, Populus trichocarpa (Torr. &amp; Gray).</title>
        <authorList>
            <person name="Tuskan G.A."/>
            <person name="Difazio S."/>
            <person name="Jansson S."/>
            <person name="Bohlmann J."/>
            <person name="Grigoriev I."/>
            <person name="Hellsten U."/>
            <person name="Putnam N."/>
            <person name="Ralph S."/>
            <person name="Rombauts S."/>
            <person name="Salamov A."/>
            <person name="Schein J."/>
            <person name="Sterck L."/>
            <person name="Aerts A."/>
            <person name="Bhalerao R.R."/>
            <person name="Bhalerao R.P."/>
            <person name="Blaudez D."/>
            <person name="Boerjan W."/>
            <person name="Brun A."/>
            <person name="Brunner A."/>
            <person name="Busov V."/>
            <person name="Campbell M."/>
            <person name="Carlson J."/>
            <person name="Chalot M."/>
            <person name="Chapman J."/>
            <person name="Chen G.-L."/>
            <person name="Cooper D."/>
            <person name="Coutinho P.M."/>
            <person name="Couturier J."/>
            <person name="Covert S."/>
            <person name="Cronk Q."/>
            <person name="Cunningham R."/>
            <person name="Davis J."/>
            <person name="Degroeve S."/>
            <person name="Dejardin A."/>
            <person name="dePamphilis C.W."/>
            <person name="Detter J."/>
            <person name="Dirks B."/>
            <person name="Dubchak I."/>
            <person name="Duplessis S."/>
            <person name="Ehlting J."/>
            <person name="Ellis B."/>
            <person name="Gendler K."/>
            <person name="Goodstein D."/>
            <person name="Gribskov M."/>
            <person name="Grimwood J."/>
            <person name="Groover A."/>
            <person name="Gunter L."/>
            <person name="Hamberger B."/>
            <person name="Heinze B."/>
            <person name="Helariutta Y."/>
            <person name="Henrissat B."/>
            <person name="Holligan D."/>
            <person name="Holt R."/>
            <person name="Huang W."/>
            <person name="Islam-Faridi N."/>
            <person name="Jones S."/>
            <person name="Jones-Rhoades M."/>
            <person name="Jorgensen R."/>
            <person name="Joshi C."/>
            <person name="Kangasjaervi J."/>
            <person name="Karlsson J."/>
            <person name="Kelleher C."/>
            <person name="Kirkpatrick R."/>
            <person name="Kirst M."/>
            <person name="Kohler A."/>
            <person name="Kalluri U."/>
            <person name="Larimer F."/>
            <person name="Leebens-Mack J."/>
            <person name="Leple J.-C."/>
            <person name="Locascio P."/>
            <person name="Lou Y."/>
            <person name="Lucas S."/>
            <person name="Martin F."/>
            <person name="Montanini B."/>
            <person name="Napoli C."/>
            <person name="Nelson D.R."/>
            <person name="Nelson C."/>
            <person name="Nieminen K."/>
            <person name="Nilsson O."/>
            <person name="Pereda V."/>
            <person name="Peter G."/>
            <person name="Philippe R."/>
            <person name="Pilate G."/>
            <person name="Poliakov A."/>
            <person name="Razumovskaya J."/>
            <person name="Richardson P."/>
            <person name="Rinaldi C."/>
            <person name="Ritland K."/>
            <person name="Rouze P."/>
            <person name="Ryaboy D."/>
            <person name="Schmutz J."/>
            <person name="Schrader J."/>
            <person name="Segerman B."/>
            <person name="Shin H."/>
            <person name="Siddiqui A."/>
            <person name="Sterky F."/>
            <person name="Terry A."/>
            <person name="Tsai C.-J."/>
            <person name="Uberbacher E."/>
            <person name="Unneberg P."/>
            <person name="Vahala J."/>
            <person name="Wall K."/>
            <person name="Wessler S."/>
            <person name="Yang G."/>
            <person name="Yin T."/>
            <person name="Douglas C."/>
            <person name="Marra M."/>
            <person name="Sandberg G."/>
            <person name="Van de Peer Y."/>
            <person name="Rokhsar D.S."/>
        </authorList>
    </citation>
    <scope>NUCLEOTIDE SEQUENCE [LARGE SCALE GENOMIC DNA]</scope>
    <source>
        <strain>cv. Nisqually</strain>
    </source>
</reference>
<reference key="2">
    <citation type="submission" date="2008-12" db="EMBL/GenBank/DDBJ databases">
        <authorList>
            <consortium name="US DOE Joint Genome Institute (JGI-PGF)"/>
            <person name="Grigoriev I.V."/>
            <person name="Terry A."/>
            <person name="Salamov A.A."/>
            <person name="Otillar R."/>
            <person name="Lou Y."/>
            <person name="Lucas S."/>
            <person name="Hammon N."/>
            <person name="Glavina del Rio T."/>
            <person name="Detter J."/>
            <person name="Kalin E."/>
            <person name="Tice H."/>
            <person name="Pitluck S."/>
            <person name="Chapman J."/>
            <person name="Putnam N.H."/>
            <person name="Brunner A."/>
            <person name="Busov V."/>
            <person name="Campbell M."/>
            <person name="Chalot M."/>
            <person name="Covert S."/>
            <person name="Davis J."/>
            <person name="DiFazio S."/>
            <person name="Gribskov M."/>
            <person name="Gunter L."/>
            <person name="Hamberger B."/>
            <person name="Jansson S."/>
            <person name="Joshi C."/>
            <person name="Larimer F."/>
            <person name="Martin F."/>
            <person name="Napoli C."/>
            <person name="Nelson D."/>
            <person name="Ralph S."/>
            <person name="Rombauts S."/>
            <person name="Rouze P."/>
            <person name="Schrader J."/>
            <person name="Tsai C."/>
            <person name="Vahala J."/>
            <person name="Tuskan G."/>
            <person name="Rokhsar D."/>
        </authorList>
    </citation>
    <scope>GENOME REANNOTATION</scope>
    <source>
        <strain>cv. Nisqually</strain>
    </source>
</reference>
<evidence type="ECO:0000255" key="1">
    <source>
        <dbReference type="HAMAP-Rule" id="MF_03128"/>
    </source>
</evidence>
<evidence type="ECO:0000255" key="2">
    <source>
        <dbReference type="PROSITE-ProRule" id="PRU01266"/>
    </source>
</evidence>
<evidence type="ECO:0000256" key="3">
    <source>
        <dbReference type="SAM" id="MobiDB-lite"/>
    </source>
</evidence>
<accession>B9H5L9</accession>
<organism>
    <name type="scientific">Populus trichocarpa</name>
    <name type="common">Western balsam poplar</name>
    <name type="synonym">Populus balsamifera subsp. trichocarpa</name>
    <dbReference type="NCBI Taxonomy" id="3694"/>
    <lineage>
        <taxon>Eukaryota</taxon>
        <taxon>Viridiplantae</taxon>
        <taxon>Streptophyta</taxon>
        <taxon>Embryophyta</taxon>
        <taxon>Tracheophyta</taxon>
        <taxon>Spermatophyta</taxon>
        <taxon>Magnoliopsida</taxon>
        <taxon>eudicotyledons</taxon>
        <taxon>Gunneridae</taxon>
        <taxon>Pentapetalae</taxon>
        <taxon>rosids</taxon>
        <taxon>fabids</taxon>
        <taxon>Malpighiales</taxon>
        <taxon>Salicaceae</taxon>
        <taxon>Saliceae</taxon>
        <taxon>Populus</taxon>
    </lineage>
</organism>
<name>LIAS_POPTR</name>
<comment type="function">
    <text evidence="1">Catalyzes the radical-mediated insertion of two sulfur atoms into the C-6 and C-8 positions of the octanoyl moiety bound to the lipoyl domains of lipoate-dependent enzymes, thereby converting the octanoylated domains into lipoylated derivatives.</text>
</comment>
<comment type="catalytic activity">
    <reaction evidence="1">
        <text>[[Fe-S] cluster scaffold protein carrying a second [4Fe-4S](2+) cluster] + N(6)-octanoyl-L-lysyl-[protein] + 2 oxidized [2Fe-2S]-[ferredoxin] + 2 S-adenosyl-L-methionine + 4 H(+) = [[Fe-S] cluster scaffold protein] + N(6)-[(R)-dihydrolipoyl]-L-lysyl-[protein] + 4 Fe(3+) + 2 hydrogen sulfide + 2 5'-deoxyadenosine + 2 L-methionine + 2 reduced [2Fe-2S]-[ferredoxin]</text>
        <dbReference type="Rhea" id="RHEA:16585"/>
        <dbReference type="Rhea" id="RHEA-COMP:9928"/>
        <dbReference type="Rhea" id="RHEA-COMP:10000"/>
        <dbReference type="Rhea" id="RHEA-COMP:10001"/>
        <dbReference type="Rhea" id="RHEA-COMP:10475"/>
        <dbReference type="Rhea" id="RHEA-COMP:14568"/>
        <dbReference type="Rhea" id="RHEA-COMP:14569"/>
        <dbReference type="ChEBI" id="CHEBI:15378"/>
        <dbReference type="ChEBI" id="CHEBI:17319"/>
        <dbReference type="ChEBI" id="CHEBI:29034"/>
        <dbReference type="ChEBI" id="CHEBI:29919"/>
        <dbReference type="ChEBI" id="CHEBI:33722"/>
        <dbReference type="ChEBI" id="CHEBI:33737"/>
        <dbReference type="ChEBI" id="CHEBI:33738"/>
        <dbReference type="ChEBI" id="CHEBI:57844"/>
        <dbReference type="ChEBI" id="CHEBI:59789"/>
        <dbReference type="ChEBI" id="CHEBI:78809"/>
        <dbReference type="ChEBI" id="CHEBI:83100"/>
        <dbReference type="EC" id="2.8.1.8"/>
    </reaction>
</comment>
<comment type="cofactor">
    <cofactor evidence="1">
        <name>[4Fe-4S] cluster</name>
        <dbReference type="ChEBI" id="CHEBI:49883"/>
    </cofactor>
    <text evidence="1">Binds 2 [4Fe-4S] clusters per subunit. One cluster is coordinated with 3 cysteines and an exchangeable S-adenosyl-L-methionine.</text>
</comment>
<comment type="pathway">
    <text evidence="1">Protein modification; protein lipoylation via endogenous pathway; protein N(6)-(lipoyl)lysine from octanoyl-[acyl-carrier-protein]: step 2/2.</text>
</comment>
<comment type="subcellular location">
    <subcellularLocation>
        <location evidence="1">Mitochondrion</location>
    </subcellularLocation>
</comment>
<comment type="miscellaneous">
    <text evidence="1">This protein may be expected to contain an N-terminal transit peptide but none has been predicted.</text>
</comment>
<comment type="similarity">
    <text evidence="1">Belongs to the radical SAM superfamily. Lipoyl synthase family.</text>
</comment>
<dbReference type="EC" id="2.8.1.8" evidence="1"/>
<dbReference type="EMBL" id="CM009294">
    <property type="protein sequence ID" value="EEE93357.1"/>
    <property type="molecule type" value="Genomic_DNA"/>
</dbReference>
<dbReference type="RefSeq" id="XP_002306361.1">
    <property type="nucleotide sequence ID" value="XM_002306325.2"/>
</dbReference>
<dbReference type="SMR" id="B9H5L9"/>
<dbReference type="FunCoup" id="B9H5L9">
    <property type="interactions" value="1374"/>
</dbReference>
<dbReference type="STRING" id="3694.B9H5L9"/>
<dbReference type="GeneID" id="7486347"/>
<dbReference type="KEGG" id="pop:7486347"/>
<dbReference type="eggNOG" id="KOG2672">
    <property type="taxonomic scope" value="Eukaryota"/>
</dbReference>
<dbReference type="HOGENOM" id="CLU_033144_2_0_1"/>
<dbReference type="InParanoid" id="B9H5L9"/>
<dbReference type="OrthoDB" id="3231at2759"/>
<dbReference type="UniPathway" id="UPA00538">
    <property type="reaction ID" value="UER00593"/>
</dbReference>
<dbReference type="Proteomes" id="UP000006729">
    <property type="component" value="Chromosome 5"/>
</dbReference>
<dbReference type="ExpressionAtlas" id="B9H5L9">
    <property type="expression patterns" value="baseline and differential"/>
</dbReference>
<dbReference type="GO" id="GO:0005739">
    <property type="term" value="C:mitochondrion"/>
    <property type="evidence" value="ECO:0000318"/>
    <property type="project" value="GO_Central"/>
</dbReference>
<dbReference type="GO" id="GO:0051539">
    <property type="term" value="F:4 iron, 4 sulfur cluster binding"/>
    <property type="evidence" value="ECO:0007669"/>
    <property type="project" value="UniProtKB-UniRule"/>
</dbReference>
<dbReference type="GO" id="GO:0016992">
    <property type="term" value="F:lipoate synthase activity"/>
    <property type="evidence" value="ECO:0000318"/>
    <property type="project" value="GO_Central"/>
</dbReference>
<dbReference type="GO" id="GO:0046872">
    <property type="term" value="F:metal ion binding"/>
    <property type="evidence" value="ECO:0007669"/>
    <property type="project" value="UniProtKB-KW"/>
</dbReference>
<dbReference type="GO" id="GO:0009107">
    <property type="term" value="P:lipoate biosynthetic process"/>
    <property type="evidence" value="ECO:0000318"/>
    <property type="project" value="GO_Central"/>
</dbReference>
<dbReference type="CDD" id="cd01335">
    <property type="entry name" value="Radical_SAM"/>
    <property type="match status" value="1"/>
</dbReference>
<dbReference type="FunFam" id="3.20.20.70:FF:000125">
    <property type="entry name" value="Lipoyl synthase, mitochondrial"/>
    <property type="match status" value="1"/>
</dbReference>
<dbReference type="Gene3D" id="3.20.20.70">
    <property type="entry name" value="Aldolase class I"/>
    <property type="match status" value="1"/>
</dbReference>
<dbReference type="HAMAP" id="MF_00206">
    <property type="entry name" value="Lipoyl_synth"/>
    <property type="match status" value="1"/>
</dbReference>
<dbReference type="HAMAP" id="MF_03128">
    <property type="entry name" value="Lipoyl_synth_plantM"/>
    <property type="match status" value="1"/>
</dbReference>
<dbReference type="InterPro" id="IPR013785">
    <property type="entry name" value="Aldolase_TIM"/>
</dbReference>
<dbReference type="InterPro" id="IPR006638">
    <property type="entry name" value="Elp3/MiaA/NifB-like_rSAM"/>
</dbReference>
<dbReference type="InterPro" id="IPR031691">
    <property type="entry name" value="LIAS_N"/>
</dbReference>
<dbReference type="InterPro" id="IPR003698">
    <property type="entry name" value="Lipoyl_synth"/>
</dbReference>
<dbReference type="InterPro" id="IPR027527">
    <property type="entry name" value="Lipoyl_synth_mt"/>
</dbReference>
<dbReference type="InterPro" id="IPR007197">
    <property type="entry name" value="rSAM"/>
</dbReference>
<dbReference type="NCBIfam" id="TIGR00510">
    <property type="entry name" value="lipA"/>
    <property type="match status" value="1"/>
</dbReference>
<dbReference type="NCBIfam" id="NF004019">
    <property type="entry name" value="PRK05481.1"/>
    <property type="match status" value="1"/>
</dbReference>
<dbReference type="NCBIfam" id="NF009544">
    <property type="entry name" value="PRK12928.1"/>
    <property type="match status" value="1"/>
</dbReference>
<dbReference type="PANTHER" id="PTHR10949">
    <property type="entry name" value="LIPOYL SYNTHASE"/>
    <property type="match status" value="1"/>
</dbReference>
<dbReference type="PANTHER" id="PTHR10949:SF0">
    <property type="entry name" value="LIPOYL SYNTHASE, MITOCHONDRIAL"/>
    <property type="match status" value="1"/>
</dbReference>
<dbReference type="Pfam" id="PF16881">
    <property type="entry name" value="LIAS_N"/>
    <property type="match status" value="1"/>
</dbReference>
<dbReference type="Pfam" id="PF04055">
    <property type="entry name" value="Radical_SAM"/>
    <property type="match status" value="1"/>
</dbReference>
<dbReference type="SFLD" id="SFLDF00271">
    <property type="entry name" value="lipoyl_synthase"/>
    <property type="match status" value="1"/>
</dbReference>
<dbReference type="SFLD" id="SFLDG01058">
    <property type="entry name" value="lipoyl_synthase_like"/>
    <property type="match status" value="1"/>
</dbReference>
<dbReference type="SMART" id="SM00729">
    <property type="entry name" value="Elp3"/>
    <property type="match status" value="1"/>
</dbReference>
<dbReference type="SUPFAM" id="SSF102114">
    <property type="entry name" value="Radical SAM enzymes"/>
    <property type="match status" value="1"/>
</dbReference>
<dbReference type="PROSITE" id="PS51918">
    <property type="entry name" value="RADICAL_SAM"/>
    <property type="match status" value="1"/>
</dbReference>
<sequence>MQSRFTFLATRTLKSTTTKAKNRTFSSSTVESSTKQPPQFSQTLAGLRARLAVESPTLSDFIHLQSNNTYSVEVGTKKKPLPKPKWMREAIPGGEKYVQIKKKLRELKLHTVCEEAKCPNLGECWSGGETGTATATIMILGDTCTRGCRFCNVKTSRTPPPPDPNEPTNVAEAIASWGLDYVVITSVDRDDLADQGSGHFAETVHKLKTLKPNMLIEALVPDFRGDRGCVEKVAKSGLDVFAHNIETVEELQSSVRDHRANFKQSLDVLMMAKEYAPPGTLTKTSIMLGCGEAPEQVVKTMEKVRAAGVDVMTFGQYMRPSKRHMPVSEYITPDAFEKYKTLGMEMGFRYVASGPMVRSSYKAGEFYIKSMIESDRSVSSQLPIS</sequence>